<keyword id="KW-0007">Acetylation</keyword>
<keyword id="KW-0013">ADP-ribosylation</keyword>
<keyword id="KW-0963">Cytoplasm</keyword>
<keyword id="KW-0379">Hydroxylation</keyword>
<keyword id="KW-1017">Isopeptide bond</keyword>
<keyword id="KW-0597">Phosphoprotein</keyword>
<keyword id="KW-1185">Reference proteome</keyword>
<keyword id="KW-0687">Ribonucleoprotein</keyword>
<keyword id="KW-0689">Ribosomal protein</keyword>
<keyword id="KW-0832">Ubl conjugation</keyword>
<proteinExistence type="evidence at transcript level"/>
<reference key="1">
    <citation type="submission" date="2005-06" db="EMBL/GenBank/DDBJ databases">
        <title>DNA sequences of macaque genes expressed in brain or testis and its evolutionary implications.</title>
        <authorList>
            <consortium name="International consortium for macaque cDNA sequencing and analysis"/>
        </authorList>
    </citation>
    <scope>NUCLEOTIDE SEQUENCE [LARGE SCALE MRNA]</scope>
    <source>
        <tissue>Parietal cortex</tissue>
    </source>
</reference>
<comment type="function">
    <text evidence="1">Component of the 40S small ribosomal subunit. Plays an important role in controlling cell growth and proliferation through the selective translation of particular classes of mRNA.</text>
</comment>
<comment type="subunit">
    <text evidence="1">Component of the small ribosomal subunit.</text>
</comment>
<comment type="subcellular location">
    <subcellularLocation>
        <location evidence="1">Cytoplasm</location>
    </subcellularLocation>
</comment>
<comment type="PTM">
    <text evidence="1">Ribosomal protein S6 is the major substrate of protein kinases in eukaryote ribosomes. The phosphorylation is stimulated by growth factors, tumor promoting agents, and mitogens. It is dephosphorylated at growth arrest. Phosphorylated at Ser-235 and Ser-236 by RPS6KA1 and RPS6KA3; phosphorylation at these sites facilitates the assembly of the pre-initiation complex.</text>
</comment>
<comment type="PTM">
    <text evidence="1">Specifically hydroxylated (with R stereochemistry) at C-3 of Arg-137 by KDM8.</text>
</comment>
<comment type="PTM">
    <text evidence="1">Mono-ADP-ribosylation at Glu-35 by PARP16 inhibits polysome assembly and mRNA loading, thereby inhibiting protein translation.</text>
</comment>
<comment type="similarity">
    <text evidence="3">Belongs to the eukaryotic ribosomal protein eS6 family.</text>
</comment>
<dbReference type="EMBL" id="AB169888">
    <property type="protein sequence ID" value="BAE01969.1"/>
    <property type="molecule type" value="mRNA"/>
</dbReference>
<dbReference type="RefSeq" id="XP_005581709.1">
    <property type="nucleotide sequence ID" value="XM_005581652.4"/>
</dbReference>
<dbReference type="RefSeq" id="XP_005588894.1">
    <property type="nucleotide sequence ID" value="XM_005588837.2"/>
</dbReference>
<dbReference type="SMR" id="Q4R4K6"/>
<dbReference type="STRING" id="9541.ENSMFAP00000025915"/>
<dbReference type="Ensembl" id="ENSMFAT00000034070.2">
    <property type="protein sequence ID" value="ENSMFAP00000025915.1"/>
    <property type="gene ID" value="ENSMFAG00000044377.2"/>
</dbReference>
<dbReference type="GeneID" id="101867274"/>
<dbReference type="KEGG" id="mcf:101867274"/>
<dbReference type="KEGG" id="mcf:102129682"/>
<dbReference type="CTD" id="6194"/>
<dbReference type="VEuPathDB" id="HostDB:ENSMFAG00000044377"/>
<dbReference type="eggNOG" id="KOG1646">
    <property type="taxonomic scope" value="Eukaryota"/>
</dbReference>
<dbReference type="GeneTree" id="ENSGT00390000009819"/>
<dbReference type="OMA" id="KPRYKAP"/>
<dbReference type="OrthoDB" id="12190at314294"/>
<dbReference type="Proteomes" id="UP000233100">
    <property type="component" value="Chromosome 15"/>
</dbReference>
<dbReference type="Bgee" id="ENSMFAG00000044377">
    <property type="expression patterns" value="Expressed in lymph node and 13 other cell types or tissues"/>
</dbReference>
<dbReference type="GO" id="GO:0005737">
    <property type="term" value="C:cytoplasm"/>
    <property type="evidence" value="ECO:0007669"/>
    <property type="project" value="UniProtKB-SubCell"/>
</dbReference>
<dbReference type="GO" id="GO:1990904">
    <property type="term" value="C:ribonucleoprotein complex"/>
    <property type="evidence" value="ECO:0007669"/>
    <property type="project" value="UniProtKB-KW"/>
</dbReference>
<dbReference type="GO" id="GO:0005840">
    <property type="term" value="C:ribosome"/>
    <property type="evidence" value="ECO:0007669"/>
    <property type="project" value="UniProtKB-KW"/>
</dbReference>
<dbReference type="GO" id="GO:0003735">
    <property type="term" value="F:structural constituent of ribosome"/>
    <property type="evidence" value="ECO:0007669"/>
    <property type="project" value="InterPro"/>
</dbReference>
<dbReference type="GO" id="GO:0002181">
    <property type="term" value="P:cytoplasmic translation"/>
    <property type="evidence" value="ECO:0000250"/>
    <property type="project" value="UniProtKB"/>
</dbReference>
<dbReference type="GO" id="GO:0008284">
    <property type="term" value="P:positive regulation of cell population proliferation"/>
    <property type="evidence" value="ECO:0000250"/>
    <property type="project" value="UniProtKB"/>
</dbReference>
<dbReference type="FunFam" id="1.20.5.2650:FF:000001">
    <property type="entry name" value="40S ribosomal protein S6"/>
    <property type="match status" value="1"/>
</dbReference>
<dbReference type="Gene3D" id="1.20.5.2650">
    <property type="match status" value="1"/>
</dbReference>
<dbReference type="InterPro" id="IPR001377">
    <property type="entry name" value="Ribosomal_eS6"/>
</dbReference>
<dbReference type="InterPro" id="IPR014401">
    <property type="entry name" value="Ribosomal_eS6-like"/>
</dbReference>
<dbReference type="InterPro" id="IPR018282">
    <property type="entry name" value="Ribosomal_eS6_CS"/>
</dbReference>
<dbReference type="PANTHER" id="PTHR11502">
    <property type="entry name" value="40S RIBOSOMAL PROTEIN S6"/>
    <property type="match status" value="1"/>
</dbReference>
<dbReference type="Pfam" id="PF01092">
    <property type="entry name" value="Ribosomal_S6e"/>
    <property type="match status" value="1"/>
</dbReference>
<dbReference type="PIRSF" id="PIRSF002129">
    <property type="entry name" value="Ribosom_S6_euk"/>
    <property type="match status" value="1"/>
</dbReference>
<dbReference type="SMART" id="SM01405">
    <property type="entry name" value="Ribosomal_S6e"/>
    <property type="match status" value="1"/>
</dbReference>
<dbReference type="PROSITE" id="PS00578">
    <property type="entry name" value="RIBOSOMAL_S6E"/>
    <property type="match status" value="1"/>
</dbReference>
<evidence type="ECO:0000250" key="1">
    <source>
        <dbReference type="UniProtKB" id="P62753"/>
    </source>
</evidence>
<evidence type="ECO:0000256" key="2">
    <source>
        <dbReference type="SAM" id="MobiDB-lite"/>
    </source>
</evidence>
<evidence type="ECO:0000305" key="3"/>
<protein>
    <recommendedName>
        <fullName evidence="3">Small ribosomal subunit protein eS6</fullName>
    </recommendedName>
    <alternativeName>
        <fullName>40S ribosomal protein S6</fullName>
    </alternativeName>
</protein>
<name>RS6_MACFA</name>
<gene>
    <name type="primary">RPS6</name>
    <name type="ORF">QnpA-17470</name>
</gene>
<accession>Q4R4K6</accession>
<feature type="chain" id="PRO_0000319313" description="Small ribosomal subunit protein eS6">
    <location>
        <begin position="1"/>
        <end position="249"/>
    </location>
</feature>
<feature type="region of interest" description="Disordered" evidence="2">
    <location>
        <begin position="217"/>
        <end position="249"/>
    </location>
</feature>
<feature type="compositionally biased region" description="Basic and acidic residues" evidence="2">
    <location>
        <begin position="217"/>
        <end position="229"/>
    </location>
</feature>
<feature type="compositionally biased region" description="Low complexity" evidence="2">
    <location>
        <begin position="236"/>
        <end position="249"/>
    </location>
</feature>
<feature type="modified residue" description="ADP-ribosyl glutamic acid" evidence="1">
    <location>
        <position position="35"/>
    </location>
</feature>
<feature type="modified residue" description="(3R)-3-hydroxyarginine" evidence="1">
    <location>
        <position position="137"/>
    </location>
</feature>
<feature type="modified residue" description="Phosphoserine" evidence="1">
    <location>
        <position position="148"/>
    </location>
</feature>
<feature type="modified residue" description="N6-acetyllysine" evidence="1">
    <location>
        <position position="211"/>
    </location>
</feature>
<feature type="modified residue" description="Phosphoserine; by RPS6KA1, RPS6KA3, DAPK1 and PASK" evidence="1">
    <location>
        <position position="235"/>
    </location>
</feature>
<feature type="modified residue" description="Phosphoserine; by RPS6KA1, RPS6KA3, DAPK1 and PASK" evidence="1">
    <location>
        <position position="236"/>
    </location>
</feature>
<feature type="modified residue" description="Phosphoserine" evidence="1">
    <location>
        <position position="240"/>
    </location>
</feature>
<feature type="modified residue" description="Phosphoserine" evidence="1">
    <location>
        <position position="242"/>
    </location>
</feature>
<feature type="modified residue" description="Phosphoserine" evidence="1">
    <location>
        <position position="244"/>
    </location>
</feature>
<feature type="modified residue" description="Phosphoserine" evidence="1">
    <location>
        <position position="247"/>
    </location>
</feature>
<feature type="cross-link" description="Glycyl lysine isopeptide (Lys-Gly) (interchain with G-Cter in SUMO2)" evidence="1">
    <location>
        <position position="14"/>
    </location>
</feature>
<sequence length="249" mass="28681">MKLNISFPATGCQKLIEVDDERKLRTFYEKRMATEVAADALGEEWKGYVVRISGGNDKQGFPMKQGVLTHGRVRLLLSKGHSCYRPRRTGERKRKSVRGCIVDANLSVLNLVIVKKGEKDIPGLTDTTVPRRLGPKRASRIRKLFNLSKEDDVRQYVVRKPLNKEGKKPRTKAPKIQRLVTPRVLQHKRRRIALKKQRTKKNKEEAAEYAKLLAKRMKEAKEKRQEQIAKRRRLSSLRASTSKSESSQK</sequence>
<organism>
    <name type="scientific">Macaca fascicularis</name>
    <name type="common">Crab-eating macaque</name>
    <name type="synonym">Cynomolgus monkey</name>
    <dbReference type="NCBI Taxonomy" id="9541"/>
    <lineage>
        <taxon>Eukaryota</taxon>
        <taxon>Metazoa</taxon>
        <taxon>Chordata</taxon>
        <taxon>Craniata</taxon>
        <taxon>Vertebrata</taxon>
        <taxon>Euteleostomi</taxon>
        <taxon>Mammalia</taxon>
        <taxon>Eutheria</taxon>
        <taxon>Euarchontoglires</taxon>
        <taxon>Primates</taxon>
        <taxon>Haplorrhini</taxon>
        <taxon>Catarrhini</taxon>
        <taxon>Cercopithecidae</taxon>
        <taxon>Cercopithecinae</taxon>
        <taxon>Macaca</taxon>
    </lineage>
</organism>